<keyword id="KW-0067">ATP-binding</keyword>
<keyword id="KW-0143">Chaperone</keyword>
<keyword id="KW-0963">Cytoplasm</keyword>
<keyword id="KW-0413">Isomerase</keyword>
<keyword id="KW-0547">Nucleotide-binding</keyword>
<keyword id="KW-1185">Reference proteome</keyword>
<gene>
    <name evidence="1" type="primary">groEL3</name>
    <name evidence="1" type="synonym">groL3</name>
    <name type="synonym">mmoG</name>
    <name type="ordered locus">MCA1202</name>
</gene>
<evidence type="ECO:0000255" key="1">
    <source>
        <dbReference type="HAMAP-Rule" id="MF_00600"/>
    </source>
</evidence>
<evidence type="ECO:0000305" key="2"/>
<comment type="function">
    <text evidence="1">Together with its co-chaperonin GroES, plays an essential role in assisting protein folding. The GroEL-GroES system forms a nano-cage that allows encapsulation of the non-native substrate proteins and provides a physical environment optimized to promote and accelerate protein folding.</text>
</comment>
<comment type="catalytic activity">
    <reaction evidence="1">
        <text>ATP + H2O + a folded polypeptide = ADP + phosphate + an unfolded polypeptide.</text>
        <dbReference type="EC" id="5.6.1.7"/>
    </reaction>
</comment>
<comment type="subunit">
    <text evidence="1">Forms a cylinder of 14 subunits composed of two heptameric rings stacked back-to-back. Interacts with the co-chaperonin GroES.</text>
</comment>
<comment type="subcellular location">
    <subcellularLocation>
        <location evidence="1">Cytoplasm</location>
    </subcellularLocation>
</comment>
<comment type="similarity">
    <text evidence="1 2">Belongs to the chaperonin (HSP60) family.</text>
</comment>
<name>CH603_METCA</name>
<accession>Q7WZ32</accession>
<accession>Q609N0</accession>
<dbReference type="EC" id="5.6.1.7" evidence="1"/>
<dbReference type="EMBL" id="AF525283">
    <property type="protein sequence ID" value="AAP80770.1"/>
    <property type="molecule type" value="Genomic_DNA"/>
</dbReference>
<dbReference type="EMBL" id="AE017282">
    <property type="protein sequence ID" value="AAU92713.1"/>
    <property type="molecule type" value="Genomic_DNA"/>
</dbReference>
<dbReference type="RefSeq" id="WP_010960489.1">
    <property type="nucleotide sequence ID" value="NC_002977.6"/>
</dbReference>
<dbReference type="SMR" id="Q7WZ32"/>
<dbReference type="STRING" id="243233.MCA1202"/>
<dbReference type="GeneID" id="88223489"/>
<dbReference type="KEGG" id="mca:MCA1202"/>
<dbReference type="eggNOG" id="COG0459">
    <property type="taxonomic scope" value="Bacteria"/>
</dbReference>
<dbReference type="HOGENOM" id="CLU_016503_3_0_6"/>
<dbReference type="Proteomes" id="UP000006821">
    <property type="component" value="Chromosome"/>
</dbReference>
<dbReference type="GO" id="GO:0005737">
    <property type="term" value="C:cytoplasm"/>
    <property type="evidence" value="ECO:0007669"/>
    <property type="project" value="UniProtKB-SubCell"/>
</dbReference>
<dbReference type="GO" id="GO:0005524">
    <property type="term" value="F:ATP binding"/>
    <property type="evidence" value="ECO:0007669"/>
    <property type="project" value="UniProtKB-KW"/>
</dbReference>
<dbReference type="GO" id="GO:0140662">
    <property type="term" value="F:ATP-dependent protein folding chaperone"/>
    <property type="evidence" value="ECO:0007669"/>
    <property type="project" value="InterPro"/>
</dbReference>
<dbReference type="GO" id="GO:0016853">
    <property type="term" value="F:isomerase activity"/>
    <property type="evidence" value="ECO:0007669"/>
    <property type="project" value="UniProtKB-KW"/>
</dbReference>
<dbReference type="GO" id="GO:0042026">
    <property type="term" value="P:protein refolding"/>
    <property type="evidence" value="ECO:0007669"/>
    <property type="project" value="InterPro"/>
</dbReference>
<dbReference type="CDD" id="cd03344">
    <property type="entry name" value="GroEL"/>
    <property type="match status" value="1"/>
</dbReference>
<dbReference type="FunFam" id="3.50.7.10:FF:000001">
    <property type="entry name" value="60 kDa chaperonin"/>
    <property type="match status" value="1"/>
</dbReference>
<dbReference type="Gene3D" id="3.50.7.10">
    <property type="entry name" value="GroEL"/>
    <property type="match status" value="1"/>
</dbReference>
<dbReference type="Gene3D" id="1.10.560.10">
    <property type="entry name" value="GroEL-like equatorial domain"/>
    <property type="match status" value="1"/>
</dbReference>
<dbReference type="Gene3D" id="3.30.260.10">
    <property type="entry name" value="TCP-1-like chaperonin intermediate domain"/>
    <property type="match status" value="1"/>
</dbReference>
<dbReference type="InterPro" id="IPR001844">
    <property type="entry name" value="Cpn60/GroEL"/>
</dbReference>
<dbReference type="InterPro" id="IPR002423">
    <property type="entry name" value="Cpn60/GroEL/TCP-1"/>
</dbReference>
<dbReference type="InterPro" id="IPR027409">
    <property type="entry name" value="GroEL-like_apical_dom_sf"/>
</dbReference>
<dbReference type="InterPro" id="IPR027413">
    <property type="entry name" value="GROEL-like_equatorial_sf"/>
</dbReference>
<dbReference type="InterPro" id="IPR027410">
    <property type="entry name" value="TCP-1-like_intermed_sf"/>
</dbReference>
<dbReference type="NCBIfam" id="NF000592">
    <property type="entry name" value="PRK00013.1"/>
    <property type="match status" value="1"/>
</dbReference>
<dbReference type="NCBIfam" id="NF009487">
    <property type="entry name" value="PRK12849.1"/>
    <property type="match status" value="1"/>
</dbReference>
<dbReference type="NCBIfam" id="NF009488">
    <property type="entry name" value="PRK12850.1"/>
    <property type="match status" value="1"/>
</dbReference>
<dbReference type="NCBIfam" id="NF009489">
    <property type="entry name" value="PRK12851.1"/>
    <property type="match status" value="1"/>
</dbReference>
<dbReference type="PANTHER" id="PTHR45633">
    <property type="entry name" value="60 KDA HEAT SHOCK PROTEIN, MITOCHONDRIAL"/>
    <property type="match status" value="1"/>
</dbReference>
<dbReference type="Pfam" id="PF00118">
    <property type="entry name" value="Cpn60_TCP1"/>
    <property type="match status" value="1"/>
</dbReference>
<dbReference type="PRINTS" id="PR00298">
    <property type="entry name" value="CHAPERONIN60"/>
</dbReference>
<dbReference type="SUPFAM" id="SSF52029">
    <property type="entry name" value="GroEL apical domain-like"/>
    <property type="match status" value="1"/>
</dbReference>
<dbReference type="SUPFAM" id="SSF48592">
    <property type="entry name" value="GroEL equatorial domain-like"/>
    <property type="match status" value="1"/>
</dbReference>
<dbReference type="SUPFAM" id="SSF54849">
    <property type="entry name" value="GroEL-intermediate domain like"/>
    <property type="match status" value="2"/>
</dbReference>
<reference key="1">
    <citation type="journal article" date="2003" name="Microbiology">
        <title>Genes involved in the copper-dependent regulation of soluble methane monooxygenase of Methylococcus capsulatus (Bath): cloning, sequencing and mutational analysis.</title>
        <authorList>
            <person name="Csaki R."/>
            <person name="Bodrossy L."/>
            <person name="Klem J."/>
            <person name="Murrell J.C."/>
            <person name="Kovacs K.L."/>
        </authorList>
    </citation>
    <scope>NUCLEOTIDE SEQUENCE [GENOMIC DNA]</scope>
    <source>
        <strain>ATCC 33009 / NCIMB 11132 / Bath</strain>
    </source>
</reference>
<reference key="2">
    <citation type="journal article" date="2004" name="PLoS Biol.">
        <title>Genomic insights into methanotrophy: the complete genome sequence of Methylococcus capsulatus (Bath).</title>
        <authorList>
            <person name="Ward N.L."/>
            <person name="Larsen O."/>
            <person name="Sakwa J."/>
            <person name="Bruseth L."/>
            <person name="Khouri H.M."/>
            <person name="Durkin A.S."/>
            <person name="Dimitrov G."/>
            <person name="Jiang L."/>
            <person name="Scanlan D."/>
            <person name="Kang K.H."/>
            <person name="Lewis M.R."/>
            <person name="Nelson K.E."/>
            <person name="Methe B.A."/>
            <person name="Wu M."/>
            <person name="Heidelberg J.F."/>
            <person name="Paulsen I.T."/>
            <person name="Fouts D.E."/>
            <person name="Ravel J."/>
            <person name="Tettelin H."/>
            <person name="Ren Q."/>
            <person name="Read T.D."/>
            <person name="DeBoy R.T."/>
            <person name="Seshadri R."/>
            <person name="Salzberg S.L."/>
            <person name="Jensen H.B."/>
            <person name="Birkeland N.K."/>
            <person name="Nelson W.C."/>
            <person name="Dodson R.J."/>
            <person name="Grindhaug S.H."/>
            <person name="Holt I.E."/>
            <person name="Eidhammer I."/>
            <person name="Jonasen I."/>
            <person name="Vanaken S."/>
            <person name="Utterback T.R."/>
            <person name="Feldblyum T.V."/>
            <person name="Fraser C.M."/>
            <person name="Lillehaug J.R."/>
            <person name="Eisen J.A."/>
        </authorList>
    </citation>
    <scope>NUCLEOTIDE SEQUENCE [LARGE SCALE GENOMIC DNA]</scope>
    <source>
        <strain>ATCC 33009 / NCIMB 11132 / Bath</strain>
    </source>
</reference>
<feature type="chain" id="PRO_0000063418" description="Chaperonin GroEL 3">
    <location>
        <begin position="1"/>
        <end position="559"/>
    </location>
</feature>
<feature type="binding site" evidence="1">
    <location>
        <begin position="88"/>
        <end position="92"/>
    </location>
    <ligand>
        <name>ATP</name>
        <dbReference type="ChEBI" id="CHEBI:30616"/>
    </ligand>
</feature>
<feature type="binding site" evidence="1">
    <location>
        <position position="426"/>
    </location>
    <ligand>
        <name>ATP</name>
        <dbReference type="ChEBI" id="CHEBI:30616"/>
    </ligand>
</feature>
<feature type="binding site" evidence="1">
    <location>
        <position position="507"/>
    </location>
    <ligand>
        <name>ATP</name>
        <dbReference type="ChEBI" id="CHEBI:30616"/>
    </ligand>
</feature>
<protein>
    <recommendedName>
        <fullName evidence="1">Chaperonin GroEL 3</fullName>
        <ecNumber evidence="1">5.6.1.7</ecNumber>
    </recommendedName>
    <alternativeName>
        <fullName evidence="1">60 kDa chaperonin 3</fullName>
    </alternativeName>
    <alternativeName>
        <fullName evidence="1">Chaperonin-60 3</fullName>
        <shortName evidence="1">Cpn60 3</shortName>
    </alternativeName>
</protein>
<organism>
    <name type="scientific">Methylococcus capsulatus (strain ATCC 33009 / NCIMB 11132 / Bath)</name>
    <dbReference type="NCBI Taxonomy" id="243233"/>
    <lineage>
        <taxon>Bacteria</taxon>
        <taxon>Pseudomonadati</taxon>
        <taxon>Pseudomonadota</taxon>
        <taxon>Gammaproteobacteria</taxon>
        <taxon>Methylococcales</taxon>
        <taxon>Methylococcaceae</taxon>
        <taxon>Methylococcus</taxon>
    </lineage>
</organism>
<sequence>MAKEVVYRGSARQRMMQGIEILARAAIPTLGATGPSVMIQHRADGLPPISTRDGVTVANSIVLKDRVANLGARLLRDVAGTMSREAGDGTTTAIVLARHIAREMFKSLAVGADPIALKRGIDRAVARVSEDIGARAWRGDKESVILGVAAVATKGEPGVGRLLLEALDAVGVHGAVSIELGQRREDLLDVVDGYRWEKGYLSPYFVTDRARELAELEDVYLLMTDREVVDFIDLVPLLEAVTEAGGSLLIAADRVHEKALAGLLLNHVRGVFKAVAVTAPGFGDKRPNRLLDLAALTGGRAVLEAQGDRLDRVTLADLGRVRRAVVSADDTALLGIPGTEASRARLEGLRLEAEQYRALKPGQGSATGRLHELEEIEARIVGLSGKSAVYRVGGVTDVEMKERMVRIENAYRSVVSALEEGVLPGGGVGFLGSMPVLAELEARDADEARGIGIVRSALTEPLRIIGENSGLSGEAVVAKVMDHANPGWGYDQESGSFCDLHARGIWDAAKVLRLALEKAASVAGTFLTTEAVVLEIPDTDAFAGFSAEWAAATREDPRV</sequence>
<proteinExistence type="inferred from homology"/>